<organism>
    <name type="scientific">Streptococcus equi subsp. equi (strain 4047)</name>
    <dbReference type="NCBI Taxonomy" id="553482"/>
    <lineage>
        <taxon>Bacteria</taxon>
        <taxon>Bacillati</taxon>
        <taxon>Bacillota</taxon>
        <taxon>Bacilli</taxon>
        <taxon>Lactobacillales</taxon>
        <taxon>Streptococcaceae</taxon>
        <taxon>Streptococcus</taxon>
    </lineage>
</organism>
<protein>
    <recommendedName>
        <fullName evidence="1">Small ribosomal subunit protein uS19</fullName>
    </recommendedName>
    <alternativeName>
        <fullName evidence="2">30S ribosomal protein S19</fullName>
    </alternativeName>
</protein>
<comment type="function">
    <text evidence="1">Protein S19 forms a complex with S13 that binds strongly to the 16S ribosomal RNA.</text>
</comment>
<comment type="similarity">
    <text evidence="1">Belongs to the universal ribosomal protein uS19 family.</text>
</comment>
<name>RS19_STRE4</name>
<accession>C0M7R3</accession>
<dbReference type="EMBL" id="FM204883">
    <property type="protein sequence ID" value="CAW91974.1"/>
    <property type="molecule type" value="Genomic_DNA"/>
</dbReference>
<dbReference type="RefSeq" id="WP_000533765.1">
    <property type="nucleotide sequence ID" value="NC_012471.1"/>
</dbReference>
<dbReference type="SMR" id="C0M7R3"/>
<dbReference type="GeneID" id="98392396"/>
<dbReference type="KEGG" id="seu:SEQ_0059"/>
<dbReference type="HOGENOM" id="CLU_144911_0_1_9"/>
<dbReference type="OrthoDB" id="9797833at2"/>
<dbReference type="Proteomes" id="UP000001365">
    <property type="component" value="Chromosome"/>
</dbReference>
<dbReference type="GO" id="GO:0005737">
    <property type="term" value="C:cytoplasm"/>
    <property type="evidence" value="ECO:0007669"/>
    <property type="project" value="UniProtKB-ARBA"/>
</dbReference>
<dbReference type="GO" id="GO:0015935">
    <property type="term" value="C:small ribosomal subunit"/>
    <property type="evidence" value="ECO:0007669"/>
    <property type="project" value="InterPro"/>
</dbReference>
<dbReference type="GO" id="GO:0019843">
    <property type="term" value="F:rRNA binding"/>
    <property type="evidence" value="ECO:0007669"/>
    <property type="project" value="UniProtKB-UniRule"/>
</dbReference>
<dbReference type="GO" id="GO:0003735">
    <property type="term" value="F:structural constituent of ribosome"/>
    <property type="evidence" value="ECO:0007669"/>
    <property type="project" value="InterPro"/>
</dbReference>
<dbReference type="GO" id="GO:0000028">
    <property type="term" value="P:ribosomal small subunit assembly"/>
    <property type="evidence" value="ECO:0007669"/>
    <property type="project" value="TreeGrafter"/>
</dbReference>
<dbReference type="GO" id="GO:0006412">
    <property type="term" value="P:translation"/>
    <property type="evidence" value="ECO:0007669"/>
    <property type="project" value="UniProtKB-UniRule"/>
</dbReference>
<dbReference type="FunFam" id="3.30.860.10:FF:000001">
    <property type="entry name" value="30S ribosomal protein S19"/>
    <property type="match status" value="1"/>
</dbReference>
<dbReference type="Gene3D" id="3.30.860.10">
    <property type="entry name" value="30s Ribosomal Protein S19, Chain A"/>
    <property type="match status" value="1"/>
</dbReference>
<dbReference type="HAMAP" id="MF_00531">
    <property type="entry name" value="Ribosomal_uS19"/>
    <property type="match status" value="1"/>
</dbReference>
<dbReference type="InterPro" id="IPR002222">
    <property type="entry name" value="Ribosomal_uS19"/>
</dbReference>
<dbReference type="InterPro" id="IPR005732">
    <property type="entry name" value="Ribosomal_uS19_bac-type"/>
</dbReference>
<dbReference type="InterPro" id="IPR020934">
    <property type="entry name" value="Ribosomal_uS19_CS"/>
</dbReference>
<dbReference type="InterPro" id="IPR023575">
    <property type="entry name" value="Ribosomal_uS19_SF"/>
</dbReference>
<dbReference type="NCBIfam" id="TIGR01050">
    <property type="entry name" value="rpsS_bact"/>
    <property type="match status" value="1"/>
</dbReference>
<dbReference type="PANTHER" id="PTHR11880">
    <property type="entry name" value="RIBOSOMAL PROTEIN S19P FAMILY MEMBER"/>
    <property type="match status" value="1"/>
</dbReference>
<dbReference type="PANTHER" id="PTHR11880:SF8">
    <property type="entry name" value="SMALL RIBOSOMAL SUBUNIT PROTEIN US19M"/>
    <property type="match status" value="1"/>
</dbReference>
<dbReference type="Pfam" id="PF00203">
    <property type="entry name" value="Ribosomal_S19"/>
    <property type="match status" value="1"/>
</dbReference>
<dbReference type="PIRSF" id="PIRSF002144">
    <property type="entry name" value="Ribosomal_S19"/>
    <property type="match status" value="1"/>
</dbReference>
<dbReference type="PRINTS" id="PR00975">
    <property type="entry name" value="RIBOSOMALS19"/>
</dbReference>
<dbReference type="SUPFAM" id="SSF54570">
    <property type="entry name" value="Ribosomal protein S19"/>
    <property type="match status" value="1"/>
</dbReference>
<dbReference type="PROSITE" id="PS00323">
    <property type="entry name" value="RIBOSOMAL_S19"/>
    <property type="match status" value="1"/>
</dbReference>
<gene>
    <name evidence="1" type="primary">rpsS</name>
    <name type="ordered locus">SEQ_0059</name>
</gene>
<sequence length="92" mass="10622">MGRSLKKGPFVDEHLMKKVEAQANDEKKKVIKTWSRRSTIFPSFIGYTIAVYDGRKHVPVYIQEDMVGHKLGEFAPTRTYKGHAADDKKTRR</sequence>
<proteinExistence type="inferred from homology"/>
<reference key="1">
    <citation type="journal article" date="2009" name="PLoS Pathog.">
        <title>Genomic evidence for the evolution of Streptococcus equi: host restriction, increased virulence, and genetic exchange with human pathogens.</title>
        <authorList>
            <person name="Holden M.T.G."/>
            <person name="Heather Z."/>
            <person name="Paillot R."/>
            <person name="Steward K.F."/>
            <person name="Webb K."/>
            <person name="Ainslie F."/>
            <person name="Jourdan T."/>
            <person name="Bason N.C."/>
            <person name="Holroyd N.E."/>
            <person name="Mungall K."/>
            <person name="Quail M.A."/>
            <person name="Sanders M."/>
            <person name="Simmonds M."/>
            <person name="Willey D."/>
            <person name="Brooks K."/>
            <person name="Aanensen D.M."/>
            <person name="Spratt B.G."/>
            <person name="Jolley K.A."/>
            <person name="Maiden M.C.J."/>
            <person name="Kehoe M."/>
            <person name="Chanter N."/>
            <person name="Bentley S.D."/>
            <person name="Robinson C."/>
            <person name="Maskell D.J."/>
            <person name="Parkhill J."/>
            <person name="Waller A.S."/>
        </authorList>
    </citation>
    <scope>NUCLEOTIDE SEQUENCE [LARGE SCALE GENOMIC DNA]</scope>
    <source>
        <strain>4047</strain>
    </source>
</reference>
<evidence type="ECO:0000255" key="1">
    <source>
        <dbReference type="HAMAP-Rule" id="MF_00531"/>
    </source>
</evidence>
<evidence type="ECO:0000305" key="2"/>
<keyword id="KW-0687">Ribonucleoprotein</keyword>
<keyword id="KW-0689">Ribosomal protein</keyword>
<keyword id="KW-0694">RNA-binding</keyword>
<keyword id="KW-0699">rRNA-binding</keyword>
<feature type="chain" id="PRO_1000146413" description="Small ribosomal subunit protein uS19">
    <location>
        <begin position="1"/>
        <end position="92"/>
    </location>
</feature>